<evidence type="ECO:0000250" key="1">
    <source>
        <dbReference type="UniProtKB" id="O14645"/>
    </source>
</evidence>
<evidence type="ECO:0000250" key="2">
    <source>
        <dbReference type="UniProtKB" id="Q6GN86"/>
    </source>
</evidence>
<evidence type="ECO:0000250" key="3">
    <source>
        <dbReference type="UniProtKB" id="Q8BVN8"/>
    </source>
</evidence>
<evidence type="ECO:0000255" key="4"/>
<evidence type="ECO:0000256" key="5">
    <source>
        <dbReference type="SAM" id="MobiDB-lite"/>
    </source>
</evidence>
<evidence type="ECO:0000305" key="6"/>
<evidence type="ECO:0000312" key="7">
    <source>
        <dbReference type="RGD" id="1309260"/>
    </source>
</evidence>
<name>IDLC_RAT</name>
<comment type="function">
    <text evidence="3">Involved in sperm flagellum assembly.</text>
</comment>
<comment type="subunit">
    <text evidence="1 3">Interacts with CFAP45 (By similarity). Interacts with DYNC1H1 (By similarity).</text>
</comment>
<comment type="subcellular location">
    <subcellularLocation>
        <location evidence="1">Cell projection</location>
        <location evidence="1">Cilium</location>
    </subcellularLocation>
    <subcellularLocation>
        <location evidence="1">Cell projection</location>
        <location evidence="1">Cilium</location>
        <location evidence="1">Flagellum</location>
    </subcellularLocation>
    <subcellularLocation>
        <location evidence="2">Dynein axonemal particle</location>
    </subcellularLocation>
    <subcellularLocation>
        <location evidence="3">Cytoplasm</location>
    </subcellularLocation>
</comment>
<comment type="similarity">
    <text evidence="6">Belongs to the inner dynein arm light chain family.</text>
</comment>
<accession>Q4FZV3</accession>
<protein>
    <recommendedName>
        <fullName evidence="6">Axonemal dynein light intermediate polypeptide 1</fullName>
    </recommendedName>
    <alternativeName>
        <fullName>Inner dynein arm light chain, axonemal</fullName>
    </alternativeName>
</protein>
<sequence length="258" mass="29622">MIPPADSLLKYDTPVLVSRNTEKRSPKARPLKVTVQQPGPSGAGPQPPKAKLPSTSCVPDPTKQAEEILNAILPPREWVEDTQLWIQQVSSTPSTRMDVVHLQEQLDLKLQQRQARETGICPVRRELYSQCFDELIREVTINCAERGLLLLRVRDEIRMTIAAYQTLYESSVAFGMRKALQAEQGKSDMERKITELETEKRDLERQVNEQKAKCEATEKRESERRQVEEKKHNEEIQFLKRTNQQLKAQLEGIIAPKK</sequence>
<organism>
    <name type="scientific">Rattus norvegicus</name>
    <name type="common">Rat</name>
    <dbReference type="NCBI Taxonomy" id="10116"/>
    <lineage>
        <taxon>Eukaryota</taxon>
        <taxon>Metazoa</taxon>
        <taxon>Chordata</taxon>
        <taxon>Craniata</taxon>
        <taxon>Vertebrata</taxon>
        <taxon>Euteleostomi</taxon>
        <taxon>Mammalia</taxon>
        <taxon>Eutheria</taxon>
        <taxon>Euarchontoglires</taxon>
        <taxon>Glires</taxon>
        <taxon>Rodentia</taxon>
        <taxon>Myomorpha</taxon>
        <taxon>Muroidea</taxon>
        <taxon>Muridae</taxon>
        <taxon>Murinae</taxon>
        <taxon>Rattus</taxon>
    </lineage>
</organism>
<keyword id="KW-0966">Cell projection</keyword>
<keyword id="KW-0969">Cilium</keyword>
<keyword id="KW-0175">Coiled coil</keyword>
<keyword id="KW-0963">Cytoplasm</keyword>
<keyword id="KW-0243">Dynein</keyword>
<keyword id="KW-0282">Flagellum</keyword>
<keyword id="KW-0505">Motor protein</keyword>
<keyword id="KW-1185">Reference proteome</keyword>
<dbReference type="EMBL" id="BC099087">
    <property type="protein sequence ID" value="AAH99087.1"/>
    <property type="molecule type" value="mRNA"/>
</dbReference>
<dbReference type="RefSeq" id="NP_001026817.1">
    <property type="nucleotide sequence ID" value="NM_001031647.1"/>
</dbReference>
<dbReference type="SMR" id="Q4FZV3"/>
<dbReference type="FunCoup" id="Q4FZV3">
    <property type="interactions" value="292"/>
</dbReference>
<dbReference type="STRING" id="10116.ENSRNOP00000032193"/>
<dbReference type="iPTMnet" id="Q4FZV3"/>
<dbReference type="PhosphoSitePlus" id="Q4FZV3"/>
<dbReference type="PaxDb" id="10116-ENSRNOP00000032193"/>
<dbReference type="Ensembl" id="ENSRNOT00000029388.3">
    <property type="protein sequence ID" value="ENSRNOP00000032193.2"/>
    <property type="gene ID" value="ENSRNOG00000024957.3"/>
</dbReference>
<dbReference type="GeneID" id="298524"/>
<dbReference type="KEGG" id="rno:298524"/>
<dbReference type="UCSC" id="RGD:1309260">
    <property type="organism name" value="rat"/>
</dbReference>
<dbReference type="AGR" id="RGD:1309260"/>
<dbReference type="CTD" id="7802"/>
<dbReference type="RGD" id="1309260">
    <property type="gene designation" value="Dnali1"/>
</dbReference>
<dbReference type="eggNOG" id="KOG4001">
    <property type="taxonomic scope" value="Eukaryota"/>
</dbReference>
<dbReference type="GeneTree" id="ENSGT00390000003012"/>
<dbReference type="HOGENOM" id="CLU_072652_0_0_1"/>
<dbReference type="InParanoid" id="Q4FZV3"/>
<dbReference type="OMA" id="QVTIICA"/>
<dbReference type="OrthoDB" id="273640at2759"/>
<dbReference type="PhylomeDB" id="Q4FZV3"/>
<dbReference type="TreeFam" id="TF314891"/>
<dbReference type="PRO" id="PR:Q4FZV3"/>
<dbReference type="Proteomes" id="UP000002494">
    <property type="component" value="Chromosome 5"/>
</dbReference>
<dbReference type="Bgee" id="ENSRNOG00000024957">
    <property type="expression patterns" value="Expressed in testis and 3 other cell types or tissues"/>
</dbReference>
<dbReference type="GO" id="GO:0097729">
    <property type="term" value="C:9+2 motile cilium"/>
    <property type="evidence" value="ECO:0000266"/>
    <property type="project" value="RGD"/>
</dbReference>
<dbReference type="GO" id="GO:0005930">
    <property type="term" value="C:axoneme"/>
    <property type="evidence" value="ECO:0000250"/>
    <property type="project" value="UniProtKB"/>
</dbReference>
<dbReference type="GO" id="GO:0097546">
    <property type="term" value="C:ciliary base"/>
    <property type="evidence" value="ECO:0000266"/>
    <property type="project" value="RGD"/>
</dbReference>
<dbReference type="GO" id="GO:0005929">
    <property type="term" value="C:cilium"/>
    <property type="evidence" value="ECO:0000266"/>
    <property type="project" value="RGD"/>
</dbReference>
<dbReference type="GO" id="GO:0005737">
    <property type="term" value="C:cytoplasm"/>
    <property type="evidence" value="ECO:0000266"/>
    <property type="project" value="RGD"/>
</dbReference>
<dbReference type="GO" id="GO:0120293">
    <property type="term" value="C:dynein axonemal particle"/>
    <property type="evidence" value="ECO:0000250"/>
    <property type="project" value="UniProtKB"/>
</dbReference>
<dbReference type="GO" id="GO:0030286">
    <property type="term" value="C:dynein complex"/>
    <property type="evidence" value="ECO:0007669"/>
    <property type="project" value="UniProtKB-KW"/>
</dbReference>
<dbReference type="GO" id="GO:0030175">
    <property type="term" value="C:filopodium"/>
    <property type="evidence" value="ECO:0000266"/>
    <property type="project" value="RGD"/>
</dbReference>
<dbReference type="GO" id="GO:0097386">
    <property type="term" value="C:glial cell projection"/>
    <property type="evidence" value="ECO:0000266"/>
    <property type="project" value="RGD"/>
</dbReference>
<dbReference type="GO" id="GO:0045171">
    <property type="term" value="C:intercellular bridge"/>
    <property type="evidence" value="ECO:0007669"/>
    <property type="project" value="Ensembl"/>
</dbReference>
<dbReference type="GO" id="GO:0072686">
    <property type="term" value="C:mitotic spindle"/>
    <property type="evidence" value="ECO:0007669"/>
    <property type="project" value="Ensembl"/>
</dbReference>
<dbReference type="GO" id="GO:0031514">
    <property type="term" value="C:motile cilium"/>
    <property type="evidence" value="ECO:0000250"/>
    <property type="project" value="UniProtKB"/>
</dbReference>
<dbReference type="GO" id="GO:0005654">
    <property type="term" value="C:nucleoplasm"/>
    <property type="evidence" value="ECO:0007669"/>
    <property type="project" value="Ensembl"/>
</dbReference>
<dbReference type="GO" id="GO:0036126">
    <property type="term" value="C:sperm flagellum"/>
    <property type="evidence" value="ECO:0000250"/>
    <property type="project" value="UniProtKB"/>
</dbReference>
<dbReference type="GO" id="GO:0045504">
    <property type="term" value="F:dynein heavy chain binding"/>
    <property type="evidence" value="ECO:0000266"/>
    <property type="project" value="RGD"/>
</dbReference>
<dbReference type="GO" id="GO:0120316">
    <property type="term" value="P:sperm flagellum assembly"/>
    <property type="evidence" value="ECO:0000250"/>
    <property type="project" value="UniProtKB"/>
</dbReference>
<dbReference type="InterPro" id="IPR019347">
    <property type="entry name" value="Axonemal_dynein_light_chain"/>
</dbReference>
<dbReference type="PANTHER" id="PTHR13183:SF0">
    <property type="entry name" value="AXONEMAL DYNEIN LIGHT INTERMEDIATE POLYPEPTIDE 1"/>
    <property type="match status" value="1"/>
</dbReference>
<dbReference type="PANTHER" id="PTHR13183">
    <property type="entry name" value="AXONEMAL INNER ARM DYNEIN LIGHT CHAIN 28"/>
    <property type="match status" value="1"/>
</dbReference>
<dbReference type="Pfam" id="PF10211">
    <property type="entry name" value="Ax_dynein_light"/>
    <property type="match status" value="1"/>
</dbReference>
<proteinExistence type="evidence at transcript level"/>
<gene>
    <name evidence="7" type="primary">Dnali1</name>
</gene>
<feature type="chain" id="PRO_0000114678" description="Axonemal dynein light intermediate polypeptide 1">
    <location>
        <begin position="1"/>
        <end position="258"/>
    </location>
</feature>
<feature type="region of interest" description="Disordered" evidence="5">
    <location>
        <begin position="1"/>
        <end position="60"/>
    </location>
</feature>
<feature type="region of interest" description="Disordered" evidence="5">
    <location>
        <begin position="202"/>
        <end position="231"/>
    </location>
</feature>
<feature type="coiled-coil region" evidence="4">
    <location>
        <begin position="176"/>
        <end position="255"/>
    </location>
</feature>
<reference key="1">
    <citation type="journal article" date="2004" name="Genome Res.">
        <title>The status, quality, and expansion of the NIH full-length cDNA project: the Mammalian Gene Collection (MGC).</title>
        <authorList>
            <consortium name="The MGC Project Team"/>
        </authorList>
    </citation>
    <scope>NUCLEOTIDE SEQUENCE [LARGE SCALE MRNA]</scope>
    <source>
        <tissue>Testis</tissue>
    </source>
</reference>